<sequence>MNDGSNSDATATSSAAQRQVRVQLTSKQEDIALPDNTGPILVPTSLRRYALSTLVNKLLGNDKPIPFEFLINGTFLRTSIDEYLTANGISAETTLEIEYVRALIPPLHIASFQHDDWVSSTDVLSATSPAATWASATISQGQEKILSGSYDGLLRVWNMSSQIVATSPAAADGGHTASIKAAKFVTPNQIASAGLDRTVRLWKYAESDEGFSGTIAPQLELYGHKSGINSLAVHALSNRILSASSDNSVGFWSTKKSDAPAAPDDLLPSAASRSSKRRKLNSSVTVPQRGPLALLSSHTAPVSAAIFDAKDSTVGYSASWDHSMRTWDLVTSALVDTRTTSHSLLSLEHLPELNLLAAGTSARHITLIDPRASATTISAMTLRGHTNAVVSLARDPHSTYGLISGSHDGTCRIWDIRATKTDKDGAVGESVYSISRKSLEEQGRSDTKRVGGEGVKVFSVCWDKTVGIVSAGEDKRIQINRGEGVLSA</sequence>
<proteinExistence type="inferred from homology"/>
<gene>
    <name type="primary">ytm1</name>
    <name type="ORF">AFUA_4G07630</name>
</gene>
<dbReference type="EMBL" id="AAHF01000005">
    <property type="protein sequence ID" value="EAL90024.1"/>
    <property type="molecule type" value="Genomic_DNA"/>
</dbReference>
<dbReference type="RefSeq" id="XP_752062.1">
    <property type="nucleotide sequence ID" value="XM_746969.1"/>
</dbReference>
<dbReference type="SMR" id="Q4WP10"/>
<dbReference type="FunCoup" id="Q4WP10">
    <property type="interactions" value="894"/>
</dbReference>
<dbReference type="STRING" id="330879.Q4WP10"/>
<dbReference type="EnsemblFungi" id="EAL90024">
    <property type="protein sequence ID" value="EAL90024"/>
    <property type="gene ID" value="AFUA_4G07630"/>
</dbReference>
<dbReference type="GeneID" id="3509717"/>
<dbReference type="KEGG" id="afm:AFUA_4G07630"/>
<dbReference type="VEuPathDB" id="FungiDB:Afu4g07630"/>
<dbReference type="eggNOG" id="KOG0313">
    <property type="taxonomic scope" value="Eukaryota"/>
</dbReference>
<dbReference type="HOGENOM" id="CLU_000288_57_0_1"/>
<dbReference type="InParanoid" id="Q4WP10"/>
<dbReference type="OMA" id="DHKYVEF"/>
<dbReference type="OrthoDB" id="10251381at2759"/>
<dbReference type="Proteomes" id="UP000002530">
    <property type="component" value="Chromosome 4"/>
</dbReference>
<dbReference type="GO" id="GO:0005654">
    <property type="term" value="C:nucleoplasm"/>
    <property type="evidence" value="ECO:0007669"/>
    <property type="project" value="UniProtKB-SubCell"/>
</dbReference>
<dbReference type="GO" id="GO:0070545">
    <property type="term" value="C:PeBoW complex"/>
    <property type="evidence" value="ECO:0000318"/>
    <property type="project" value="GO_Central"/>
</dbReference>
<dbReference type="GO" id="GO:0030687">
    <property type="term" value="C:preribosome, large subunit precursor"/>
    <property type="evidence" value="ECO:0000318"/>
    <property type="project" value="GO_Central"/>
</dbReference>
<dbReference type="GO" id="GO:0043021">
    <property type="term" value="F:ribonucleoprotein complex binding"/>
    <property type="evidence" value="ECO:0007669"/>
    <property type="project" value="UniProtKB-UniRule"/>
</dbReference>
<dbReference type="GO" id="GO:0051276">
    <property type="term" value="P:chromosome organization"/>
    <property type="evidence" value="ECO:0007669"/>
    <property type="project" value="EnsemblFungi"/>
</dbReference>
<dbReference type="GO" id="GO:0000466">
    <property type="term" value="P:maturation of 5.8S rRNA from tricistronic rRNA transcript (SSU-rRNA, 5.8S rRNA, LSU-rRNA)"/>
    <property type="evidence" value="ECO:0007669"/>
    <property type="project" value="UniProtKB-UniRule"/>
</dbReference>
<dbReference type="GO" id="GO:0000463">
    <property type="term" value="P:maturation of LSU-rRNA from tricistronic rRNA transcript (SSU-rRNA, 5.8S rRNA, LSU-rRNA)"/>
    <property type="evidence" value="ECO:0007669"/>
    <property type="project" value="UniProtKB-UniRule"/>
</dbReference>
<dbReference type="GO" id="GO:0110136">
    <property type="term" value="P:protein-RNA complex remodeling"/>
    <property type="evidence" value="ECO:0007669"/>
    <property type="project" value="EnsemblFungi"/>
</dbReference>
<dbReference type="GO" id="GO:0042273">
    <property type="term" value="P:ribosomal large subunit biogenesis"/>
    <property type="evidence" value="ECO:0000318"/>
    <property type="project" value="GO_Central"/>
</dbReference>
<dbReference type="FunFam" id="2.130.10.10:FF:000593">
    <property type="entry name" value="Ribosome biogenesis protein ytm1"/>
    <property type="match status" value="1"/>
</dbReference>
<dbReference type="Gene3D" id="2.130.10.10">
    <property type="entry name" value="YVTN repeat-like/Quinoprotein amine dehydrogenase"/>
    <property type="match status" value="1"/>
</dbReference>
<dbReference type="HAMAP" id="MF_03029">
    <property type="entry name" value="WDR12"/>
    <property type="match status" value="1"/>
</dbReference>
<dbReference type="InterPro" id="IPR020472">
    <property type="entry name" value="G-protein_beta_WD-40_rep"/>
</dbReference>
<dbReference type="InterPro" id="IPR012972">
    <property type="entry name" value="NLE"/>
</dbReference>
<dbReference type="InterPro" id="IPR015943">
    <property type="entry name" value="WD40/YVTN_repeat-like_dom_sf"/>
</dbReference>
<dbReference type="InterPro" id="IPR019775">
    <property type="entry name" value="WD40_repeat_CS"/>
</dbReference>
<dbReference type="InterPro" id="IPR036322">
    <property type="entry name" value="WD40_repeat_dom_sf"/>
</dbReference>
<dbReference type="InterPro" id="IPR001680">
    <property type="entry name" value="WD40_rpt"/>
</dbReference>
<dbReference type="InterPro" id="IPR028599">
    <property type="entry name" value="WDR12/Ytm1"/>
</dbReference>
<dbReference type="PANTHER" id="PTHR19855:SF11">
    <property type="entry name" value="RIBOSOME BIOGENESIS PROTEIN WDR12"/>
    <property type="match status" value="1"/>
</dbReference>
<dbReference type="PANTHER" id="PTHR19855">
    <property type="entry name" value="WD40 REPEAT PROTEIN 12, 37"/>
    <property type="match status" value="1"/>
</dbReference>
<dbReference type="Pfam" id="PF08154">
    <property type="entry name" value="NLE"/>
    <property type="match status" value="1"/>
</dbReference>
<dbReference type="Pfam" id="PF00400">
    <property type="entry name" value="WD40"/>
    <property type="match status" value="5"/>
</dbReference>
<dbReference type="PRINTS" id="PR00320">
    <property type="entry name" value="GPROTEINBRPT"/>
</dbReference>
<dbReference type="SMART" id="SM00320">
    <property type="entry name" value="WD40"/>
    <property type="match status" value="7"/>
</dbReference>
<dbReference type="SUPFAM" id="SSF50978">
    <property type="entry name" value="WD40 repeat-like"/>
    <property type="match status" value="1"/>
</dbReference>
<dbReference type="PROSITE" id="PS00678">
    <property type="entry name" value="WD_REPEATS_1"/>
    <property type="match status" value="2"/>
</dbReference>
<dbReference type="PROSITE" id="PS50082">
    <property type="entry name" value="WD_REPEATS_2"/>
    <property type="match status" value="5"/>
</dbReference>
<dbReference type="PROSITE" id="PS50294">
    <property type="entry name" value="WD_REPEATS_REGION"/>
    <property type="match status" value="1"/>
</dbReference>
<organism>
    <name type="scientific">Aspergillus fumigatus (strain ATCC MYA-4609 / CBS 101355 / FGSC A1100 / Af293)</name>
    <name type="common">Neosartorya fumigata</name>
    <dbReference type="NCBI Taxonomy" id="330879"/>
    <lineage>
        <taxon>Eukaryota</taxon>
        <taxon>Fungi</taxon>
        <taxon>Dikarya</taxon>
        <taxon>Ascomycota</taxon>
        <taxon>Pezizomycotina</taxon>
        <taxon>Eurotiomycetes</taxon>
        <taxon>Eurotiomycetidae</taxon>
        <taxon>Eurotiales</taxon>
        <taxon>Aspergillaceae</taxon>
        <taxon>Aspergillus</taxon>
        <taxon>Aspergillus subgen. Fumigati</taxon>
    </lineage>
</organism>
<feature type="chain" id="PRO_0000369576" description="Ribosome biogenesis protein ytm1">
    <location>
        <begin position="1"/>
        <end position="488"/>
    </location>
</feature>
<feature type="repeat" description="WD 1">
    <location>
        <begin position="128"/>
        <end position="167"/>
    </location>
</feature>
<feature type="repeat" description="WD 2">
    <location>
        <begin position="174"/>
        <end position="212"/>
    </location>
</feature>
<feature type="repeat" description="WD 3">
    <location>
        <begin position="223"/>
        <end position="262"/>
    </location>
</feature>
<feature type="repeat" description="WD 4">
    <location>
        <begin position="297"/>
        <end position="337"/>
    </location>
</feature>
<feature type="repeat" description="WD 5">
    <location>
        <begin position="339"/>
        <end position="378"/>
    </location>
</feature>
<feature type="repeat" description="WD 6">
    <location>
        <begin position="384"/>
        <end position="424"/>
    </location>
</feature>
<feature type="repeat" description="WD 7">
    <location>
        <begin position="452"/>
        <end position="488"/>
    </location>
</feature>
<feature type="region of interest" description="Ubiquitin-like (UBL) domain" evidence="1">
    <location>
        <begin position="20"/>
        <end position="101"/>
    </location>
</feature>
<feature type="region of interest" description="Disordered" evidence="2">
    <location>
        <begin position="257"/>
        <end position="285"/>
    </location>
</feature>
<feature type="compositionally biased region" description="Low complexity" evidence="2">
    <location>
        <begin position="259"/>
        <end position="273"/>
    </location>
</feature>
<name>YTM1_ASPFU</name>
<keyword id="KW-0539">Nucleus</keyword>
<keyword id="KW-1185">Reference proteome</keyword>
<keyword id="KW-0677">Repeat</keyword>
<keyword id="KW-0690">Ribosome biogenesis</keyword>
<keyword id="KW-0698">rRNA processing</keyword>
<keyword id="KW-0853">WD repeat</keyword>
<protein>
    <recommendedName>
        <fullName evidence="1">Ribosome biogenesis protein ytm1</fullName>
    </recommendedName>
</protein>
<evidence type="ECO:0000255" key="1">
    <source>
        <dbReference type="HAMAP-Rule" id="MF_03029"/>
    </source>
</evidence>
<evidence type="ECO:0000256" key="2">
    <source>
        <dbReference type="SAM" id="MobiDB-lite"/>
    </source>
</evidence>
<comment type="function">
    <text evidence="1">Component of the NOP7 complex, which is required for maturation of the 25S and 5.8S ribosomal RNAs and formation of the 60S ribosome.</text>
</comment>
<comment type="subunit">
    <text evidence="1">Component of the NOP7 complex, composed of erb1, nop7 and ytm1. The complex is held together by erb1, which interacts with nop7 via its N-terminal domain and with ytm1 via a high-affinity interaction between the seven-bladed beta-propeller domains of the 2 proteins. The NOP7 complex associates with the 66S pre-ribosome. Interacts (via UBL domain) with mdn1 (via VWFA/MIDAS domain).</text>
</comment>
<comment type="subcellular location">
    <subcellularLocation>
        <location evidence="1">Nucleus</location>
        <location evidence="1">Nucleolus</location>
    </subcellularLocation>
    <subcellularLocation>
        <location evidence="1">Nucleus</location>
        <location evidence="1">Nucleoplasm</location>
    </subcellularLocation>
</comment>
<comment type="similarity">
    <text evidence="1">Belongs to the WD repeat WDR12/YTM1 family.</text>
</comment>
<accession>Q4WP10</accession>
<reference key="1">
    <citation type="journal article" date="2005" name="Nature">
        <title>Genomic sequence of the pathogenic and allergenic filamentous fungus Aspergillus fumigatus.</title>
        <authorList>
            <person name="Nierman W.C."/>
            <person name="Pain A."/>
            <person name="Anderson M.J."/>
            <person name="Wortman J.R."/>
            <person name="Kim H.S."/>
            <person name="Arroyo J."/>
            <person name="Berriman M."/>
            <person name="Abe K."/>
            <person name="Archer D.B."/>
            <person name="Bermejo C."/>
            <person name="Bennett J.W."/>
            <person name="Bowyer P."/>
            <person name="Chen D."/>
            <person name="Collins M."/>
            <person name="Coulsen R."/>
            <person name="Davies R."/>
            <person name="Dyer P.S."/>
            <person name="Farman M.L."/>
            <person name="Fedorova N."/>
            <person name="Fedorova N.D."/>
            <person name="Feldblyum T.V."/>
            <person name="Fischer R."/>
            <person name="Fosker N."/>
            <person name="Fraser A."/>
            <person name="Garcia J.L."/>
            <person name="Garcia M.J."/>
            <person name="Goble A."/>
            <person name="Goldman G.H."/>
            <person name="Gomi K."/>
            <person name="Griffith-Jones S."/>
            <person name="Gwilliam R."/>
            <person name="Haas B.J."/>
            <person name="Haas H."/>
            <person name="Harris D.E."/>
            <person name="Horiuchi H."/>
            <person name="Huang J."/>
            <person name="Humphray S."/>
            <person name="Jimenez J."/>
            <person name="Keller N."/>
            <person name="Khouri H."/>
            <person name="Kitamoto K."/>
            <person name="Kobayashi T."/>
            <person name="Konzack S."/>
            <person name="Kulkarni R."/>
            <person name="Kumagai T."/>
            <person name="Lafton A."/>
            <person name="Latge J.-P."/>
            <person name="Li W."/>
            <person name="Lord A."/>
            <person name="Lu C."/>
            <person name="Majoros W.H."/>
            <person name="May G.S."/>
            <person name="Miller B.L."/>
            <person name="Mohamoud Y."/>
            <person name="Molina M."/>
            <person name="Monod M."/>
            <person name="Mouyna I."/>
            <person name="Mulligan S."/>
            <person name="Murphy L.D."/>
            <person name="O'Neil S."/>
            <person name="Paulsen I."/>
            <person name="Penalva M.A."/>
            <person name="Pertea M."/>
            <person name="Price C."/>
            <person name="Pritchard B.L."/>
            <person name="Quail M.A."/>
            <person name="Rabbinowitsch E."/>
            <person name="Rawlins N."/>
            <person name="Rajandream M.A."/>
            <person name="Reichard U."/>
            <person name="Renauld H."/>
            <person name="Robson G.D."/>
            <person name="Rodriguez de Cordoba S."/>
            <person name="Rodriguez-Pena J.M."/>
            <person name="Ronning C.M."/>
            <person name="Rutter S."/>
            <person name="Salzberg S.L."/>
            <person name="Sanchez M."/>
            <person name="Sanchez-Ferrero J.C."/>
            <person name="Saunders D."/>
            <person name="Seeger K."/>
            <person name="Squares R."/>
            <person name="Squares S."/>
            <person name="Takeuchi M."/>
            <person name="Tekaia F."/>
            <person name="Turner G."/>
            <person name="Vazquez de Aldana C.R."/>
            <person name="Weidman J."/>
            <person name="White O."/>
            <person name="Woodward J.R."/>
            <person name="Yu J.-H."/>
            <person name="Fraser C.M."/>
            <person name="Galagan J.E."/>
            <person name="Asai K."/>
            <person name="Machida M."/>
            <person name="Hall N."/>
            <person name="Barrell B.G."/>
            <person name="Denning D.W."/>
        </authorList>
    </citation>
    <scope>NUCLEOTIDE SEQUENCE [LARGE SCALE GENOMIC DNA]</scope>
    <source>
        <strain>ATCC MYA-4609 / CBS 101355 / FGSC A1100 / Af293</strain>
    </source>
</reference>